<feature type="chain" id="PRO_1000079325" description="Large ribosomal subunit protein bL32">
    <location>
        <begin position="1"/>
        <end position="64"/>
    </location>
</feature>
<feature type="region of interest" description="Disordered" evidence="2">
    <location>
        <begin position="1"/>
        <end position="64"/>
    </location>
</feature>
<feature type="compositionally biased region" description="Basic residues" evidence="2">
    <location>
        <begin position="1"/>
        <end position="16"/>
    </location>
</feature>
<sequence length="64" mass="7468">MAVQKSRKTRSRRGMRRSHDALRGAMLSKDPTTGETHLRHHISPEGYYKGRQILTPKESYEDEE</sequence>
<protein>
    <recommendedName>
        <fullName evidence="1">Large ribosomal subunit protein bL32</fullName>
    </recommendedName>
    <alternativeName>
        <fullName evidence="3">50S ribosomal protein L32</fullName>
    </alternativeName>
</protein>
<comment type="similarity">
    <text evidence="1">Belongs to the bacterial ribosomal protein bL32 family.</text>
</comment>
<accession>A9NBY1</accession>
<dbReference type="EMBL" id="CP000890">
    <property type="protein sequence ID" value="ABX77669.1"/>
    <property type="molecule type" value="Genomic_DNA"/>
</dbReference>
<dbReference type="RefSeq" id="WP_005771287.1">
    <property type="nucleotide sequence ID" value="NC_010117.1"/>
</dbReference>
<dbReference type="SMR" id="A9NBY1"/>
<dbReference type="KEGG" id="cbs:COXBURSA331_A0600"/>
<dbReference type="HOGENOM" id="CLU_129084_2_1_6"/>
<dbReference type="GO" id="GO:0015934">
    <property type="term" value="C:large ribosomal subunit"/>
    <property type="evidence" value="ECO:0007669"/>
    <property type="project" value="InterPro"/>
</dbReference>
<dbReference type="GO" id="GO:0003735">
    <property type="term" value="F:structural constituent of ribosome"/>
    <property type="evidence" value="ECO:0007669"/>
    <property type="project" value="InterPro"/>
</dbReference>
<dbReference type="GO" id="GO:0006412">
    <property type="term" value="P:translation"/>
    <property type="evidence" value="ECO:0007669"/>
    <property type="project" value="UniProtKB-UniRule"/>
</dbReference>
<dbReference type="HAMAP" id="MF_00340">
    <property type="entry name" value="Ribosomal_bL32"/>
    <property type="match status" value="1"/>
</dbReference>
<dbReference type="InterPro" id="IPR002677">
    <property type="entry name" value="Ribosomal_bL32"/>
</dbReference>
<dbReference type="InterPro" id="IPR044957">
    <property type="entry name" value="Ribosomal_bL32_bact"/>
</dbReference>
<dbReference type="InterPro" id="IPR011332">
    <property type="entry name" value="Ribosomal_zn-bd"/>
</dbReference>
<dbReference type="NCBIfam" id="TIGR01031">
    <property type="entry name" value="rpmF_bact"/>
    <property type="match status" value="1"/>
</dbReference>
<dbReference type="PANTHER" id="PTHR35534">
    <property type="entry name" value="50S RIBOSOMAL PROTEIN L32"/>
    <property type="match status" value="1"/>
</dbReference>
<dbReference type="PANTHER" id="PTHR35534:SF1">
    <property type="entry name" value="LARGE RIBOSOMAL SUBUNIT PROTEIN BL32"/>
    <property type="match status" value="1"/>
</dbReference>
<dbReference type="Pfam" id="PF01783">
    <property type="entry name" value="Ribosomal_L32p"/>
    <property type="match status" value="1"/>
</dbReference>
<dbReference type="SUPFAM" id="SSF57829">
    <property type="entry name" value="Zn-binding ribosomal proteins"/>
    <property type="match status" value="1"/>
</dbReference>
<keyword id="KW-0687">Ribonucleoprotein</keyword>
<keyword id="KW-0689">Ribosomal protein</keyword>
<evidence type="ECO:0000255" key="1">
    <source>
        <dbReference type="HAMAP-Rule" id="MF_00340"/>
    </source>
</evidence>
<evidence type="ECO:0000256" key="2">
    <source>
        <dbReference type="SAM" id="MobiDB-lite"/>
    </source>
</evidence>
<evidence type="ECO:0000305" key="3"/>
<proteinExistence type="inferred from homology"/>
<gene>
    <name evidence="1" type="primary">rpmF</name>
    <name type="ordered locus">COXBURSA331_A0600</name>
</gene>
<organism>
    <name type="scientific">Coxiella burnetii (strain RSA 331 / Henzerling II)</name>
    <dbReference type="NCBI Taxonomy" id="360115"/>
    <lineage>
        <taxon>Bacteria</taxon>
        <taxon>Pseudomonadati</taxon>
        <taxon>Pseudomonadota</taxon>
        <taxon>Gammaproteobacteria</taxon>
        <taxon>Legionellales</taxon>
        <taxon>Coxiellaceae</taxon>
        <taxon>Coxiella</taxon>
    </lineage>
</organism>
<reference key="1">
    <citation type="submission" date="2007-11" db="EMBL/GenBank/DDBJ databases">
        <title>Genome sequencing of phylogenetically and phenotypically diverse Coxiella burnetii isolates.</title>
        <authorList>
            <person name="Seshadri R."/>
            <person name="Samuel J.E."/>
        </authorList>
    </citation>
    <scope>NUCLEOTIDE SEQUENCE [LARGE SCALE GENOMIC DNA]</scope>
    <source>
        <strain>RSA 331 / Henzerling II</strain>
    </source>
</reference>
<name>RL32_COXBR</name>